<evidence type="ECO:0000250" key="1"/>
<evidence type="ECO:0000250" key="2">
    <source>
        <dbReference type="UniProtKB" id="Q6PFD5"/>
    </source>
</evidence>
<evidence type="ECO:0000256" key="3">
    <source>
        <dbReference type="SAM" id="MobiDB-lite"/>
    </source>
</evidence>
<evidence type="ECO:0000269" key="4">
    <source>
    </source>
</evidence>
<evidence type="ECO:0000269" key="5">
    <source>
    </source>
</evidence>
<evidence type="ECO:0000303" key="6">
    <source>
    </source>
</evidence>
<evidence type="ECO:0000305" key="7"/>
<evidence type="ECO:0007744" key="8">
    <source>
    </source>
</evidence>
<organism>
    <name type="scientific">Rattus norvegicus</name>
    <name type="common">Rat</name>
    <dbReference type="NCBI Taxonomy" id="10116"/>
    <lineage>
        <taxon>Eukaryota</taxon>
        <taxon>Metazoa</taxon>
        <taxon>Chordata</taxon>
        <taxon>Craniata</taxon>
        <taxon>Vertebrata</taxon>
        <taxon>Euteleostomi</taxon>
        <taxon>Mammalia</taxon>
        <taxon>Eutheria</taxon>
        <taxon>Euarchontoglires</taxon>
        <taxon>Glires</taxon>
        <taxon>Rodentia</taxon>
        <taxon>Myomorpha</taxon>
        <taxon>Muroidea</taxon>
        <taxon>Muridae</taxon>
        <taxon>Murinae</taxon>
        <taxon>Rattus</taxon>
    </lineage>
</organism>
<sequence>MRGYHGDRGSHPRPARFADQQHMDVGPAARAPYLLGSREAFSTEPRFCAPRAGLGHLSPEGPLSLSEGPSSVGPEGGPGGVGAGGSSSTFPRMYPGQGPFDTCEDCVGHPQGKGATRLLPTFLDQFEKQLPVQQDGFHTLPYQRGPAGPGPGPGSGAAPEARSESPSRIRHLVHSVQKLFAKSHSLEAPGKRDYNGPKAEGRSSSGGDSYSGPGSGGPPTSHHHHHHHHHHHHQSRHGKRSKSKDRKGDGRHQTKATGWWSSDDNLDSDSGFLGGRPPGEPGGPFCLDAPDGSYRDLSFKGRSGGSEGRCLACTGMSMSLDGQSVKRSAWHTMMVSQGRDGYPGAGPGKGLLGPETKAKARTYHYLQVPQDDWGGYPTGGKDGEIPCRRMRSGSYIKAMGDEESGDSDGSPKTSPKALARRFASRRSSSVDTARINCCVPPRIHPRSSIPGYSRSLTTGQLSEEFNQQLEAVCGSVFGELESQAVDALDLPGCFRMRSHSYLRAIQAGCSQDDDCLPLLAAPASVSGRPGSSFNFRKAPPPIPPGSQAPPRISITAQSSTDSAHESFTAAEGPARRCSSADGLDGPTMGARTLELAPVPPRASPKPPTLIIKTIPGREELRSLARQRKWRPSIGVQVETISDSDTENRSRREFHSIGVQVEEDKRRARFKRSNSVTAGVQADLELEGLAGLATVATEDKALQFGRPFQRQASEPQPGPRAPTYSVFRTVHTQGQWAYREGYPLPYEPPATDGSPGPPPVPAPGPGSGRRDSWMERGSRSLPDSGRTSPCPRDGEWFIKMLRAEVEKLEHWCQQMEREAEDYELPEEILEKIRSAVGSTQLLLSQKVQQFFRLCQQSLDPTAFPVPTFQDLAGFWDLLQLSIEDVTLKFLELQQLKANSWKLLEPKEEKKVPPPIPKKPSRGRGVPVKERSLDSVDRQRQEARKRLLAAKRAASFRHSSATESADSIEIYIPEAQTRL</sequence>
<protein>
    <recommendedName>
        <fullName>Disks large-associated protein 3</fullName>
        <shortName>DAP-3</shortName>
    </recommendedName>
    <alternativeName>
        <fullName>PSD-95/SAP90-binding protein 3</fullName>
    </alternativeName>
    <alternativeName>
        <fullName>SAP90/PSD-95-associated protein 3</fullName>
        <shortName>SAPAP3</shortName>
    </alternativeName>
</protein>
<gene>
    <name type="primary">Dlgap3</name>
    <name type="synonym">Dap3</name>
</gene>
<keyword id="KW-0025">Alternative splicing</keyword>
<keyword id="KW-1003">Cell membrane</keyword>
<keyword id="KW-0472">Membrane</keyword>
<keyword id="KW-0597">Phosphoprotein</keyword>
<keyword id="KW-1185">Reference proteome</keyword>
<keyword id="KW-0770">Synapse</keyword>
<reference key="1">
    <citation type="journal article" date="1997" name="J. Biol. Chem.">
        <title>SAPAPs. A family of PSD-95/SAP90-associated proteins localized at postsynaptic density.</title>
        <authorList>
            <person name="Takeuchi M."/>
            <person name="Hata Y."/>
            <person name="Hirao K."/>
            <person name="Toyoda A."/>
            <person name="Irie M."/>
            <person name="Takai Y."/>
        </authorList>
    </citation>
    <scope>NUCLEOTIDE SEQUENCE [MRNA] (ISOFORM 1)</scope>
    <scope>TISSUE SPECIFICITY</scope>
    <scope>SUBCELLULAR LOCATION</scope>
    <scope>INTERACTION WITH DLG4</scope>
    <source>
        <tissue>Brain</tissue>
    </source>
</reference>
<reference key="2">
    <citation type="journal article" date="2004" name="Brain Res. Mol. Brain Res.">
        <title>Distinct spatiotemporal expression of SAPAP transcripts in the developing rat brain: a novel dendritically localized mRNA.</title>
        <authorList>
            <person name="Kindler S."/>
            <person name="Rehbein M."/>
            <person name="Classen B."/>
            <person name="Richter D."/>
            <person name="Boeckers T.M."/>
        </authorList>
    </citation>
    <scope>NUCLEOTIDE SEQUENCE [MRNA] (ISOFORMS 1 AND 2)</scope>
    <scope>TISSUE SPECIFICITY</scope>
    <source>
        <tissue>Brain</tissue>
    </source>
</reference>
<reference key="3">
    <citation type="journal article" date="2012" name="Nat. Commun.">
        <title>Quantitative maps of protein phosphorylation sites across 14 different rat organs and tissues.</title>
        <authorList>
            <person name="Lundby A."/>
            <person name="Secher A."/>
            <person name="Lage K."/>
            <person name="Nordsborg N.B."/>
            <person name="Dmytriyev A."/>
            <person name="Lundby C."/>
            <person name="Olsen J.V."/>
        </authorList>
    </citation>
    <scope>PHOSPHORYLATION [LARGE SCALE ANALYSIS] AT SER-930 AND SER-933</scope>
    <scope>IDENTIFICATION BY MASS SPECTROMETRY [LARGE SCALE ANALYSIS]</scope>
</reference>
<comment type="function">
    <text>May play a role in the molecular organization of synapses and neuronal cell signaling. Could be an adapter protein linking ion channel to the subsynaptic cytoskeleton. May induce enrichment of PSD-95/SAP90 at the plasma membrane.</text>
</comment>
<comment type="subunit">
    <text evidence="1">Interacts with DLG1 and DLG4/PSD-95.</text>
</comment>
<comment type="interaction">
    <interactant intactId="EBI-375673">
        <id>P97838</id>
    </interactant>
    <interactant intactId="EBI-7361884">
        <id>Q8R4T5</id>
        <label>Tamalin</label>
    </interactant>
    <organismsDiffer>false</organismsDiffer>
    <experiments>3</experiments>
</comment>
<comment type="subcellular location">
    <subcellularLocation>
        <location evidence="5">Cell membrane</location>
        <topology evidence="5">Peripheral membrane protein</topology>
    </subcellularLocation>
    <subcellularLocation>
        <location evidence="5">Postsynaptic density</location>
    </subcellularLocation>
    <subcellularLocation>
        <location evidence="5">Synapse</location>
    </subcellularLocation>
    <text>Postsynaptic density of neuronal cells.</text>
</comment>
<comment type="alternative products">
    <event type="alternative splicing"/>
    <isoform>
        <id>P97838-1</id>
        <name>1</name>
        <name>SAPAP3+</name>
        <sequence type="displayed"/>
    </isoform>
    <isoform>
        <id>P97838-2</id>
        <name>2</name>
        <name>SAPAP3-</name>
        <sequence type="described" ref="VSP_014818"/>
    </isoform>
</comment>
<comment type="tissue specificity">
    <text evidence="4 5">Expressed in most brain regions.</text>
</comment>
<comment type="similarity">
    <text evidence="7">Belongs to the SAPAP family.</text>
</comment>
<name>DLGP3_RAT</name>
<feature type="chain" id="PRO_0000174296" description="Disks large-associated protein 3">
    <location>
        <begin position="1"/>
        <end position="977"/>
    </location>
</feature>
<feature type="region of interest" description="Disordered" evidence="3">
    <location>
        <begin position="1"/>
        <end position="30"/>
    </location>
</feature>
<feature type="region of interest" description="Disordered" evidence="3">
    <location>
        <begin position="52"/>
        <end position="90"/>
    </location>
</feature>
<feature type="region of interest" description="Disordered" evidence="3">
    <location>
        <begin position="137"/>
        <end position="167"/>
    </location>
</feature>
<feature type="region of interest" description="Disordered" evidence="3">
    <location>
        <begin position="181"/>
        <end position="289"/>
    </location>
</feature>
<feature type="region of interest" description="Disordered" evidence="3">
    <location>
        <begin position="398"/>
        <end position="417"/>
    </location>
</feature>
<feature type="region of interest" description="Disordered" evidence="3">
    <location>
        <begin position="529"/>
        <end position="582"/>
    </location>
</feature>
<feature type="region of interest" description="Disordered" evidence="3">
    <location>
        <begin position="739"/>
        <end position="788"/>
    </location>
</feature>
<feature type="region of interest" description="Disordered" evidence="3">
    <location>
        <begin position="906"/>
        <end position="939"/>
    </location>
</feature>
<feature type="compositionally biased region" description="Basic and acidic residues" evidence="3">
    <location>
        <begin position="1"/>
        <end position="10"/>
    </location>
</feature>
<feature type="compositionally biased region" description="Low complexity" evidence="3">
    <location>
        <begin position="53"/>
        <end position="73"/>
    </location>
</feature>
<feature type="compositionally biased region" description="Gly residues" evidence="3">
    <location>
        <begin position="74"/>
        <end position="85"/>
    </location>
</feature>
<feature type="compositionally biased region" description="Basic and acidic residues" evidence="3">
    <location>
        <begin position="189"/>
        <end position="201"/>
    </location>
</feature>
<feature type="compositionally biased region" description="Low complexity" evidence="3">
    <location>
        <begin position="202"/>
        <end position="212"/>
    </location>
</feature>
<feature type="compositionally biased region" description="Basic residues" evidence="3">
    <location>
        <begin position="221"/>
        <end position="245"/>
    </location>
</feature>
<feature type="compositionally biased region" description="Low complexity" evidence="3">
    <location>
        <begin position="258"/>
        <end position="271"/>
    </location>
</feature>
<feature type="compositionally biased region" description="Pro residues" evidence="3">
    <location>
        <begin position="538"/>
        <end position="547"/>
    </location>
</feature>
<feature type="compositionally biased region" description="Pro residues" evidence="3">
    <location>
        <begin position="754"/>
        <end position="763"/>
    </location>
</feature>
<feature type="compositionally biased region" description="Basic and acidic residues" evidence="3">
    <location>
        <begin position="767"/>
        <end position="777"/>
    </location>
</feature>
<feature type="compositionally biased region" description="Basic and acidic residues" evidence="3">
    <location>
        <begin position="925"/>
        <end position="939"/>
    </location>
</feature>
<feature type="modified residue" description="Phosphoserine" evidence="2">
    <location>
        <position position="58"/>
    </location>
</feature>
<feature type="modified residue" description="Phosphoserine" evidence="2">
    <location>
        <position position="404"/>
    </location>
</feature>
<feature type="modified residue" description="Phosphoserine" evidence="2">
    <location>
        <position position="407"/>
    </location>
</feature>
<feature type="modified residue" description="Phosphoserine" evidence="2">
    <location>
        <position position="410"/>
    </location>
</feature>
<feature type="modified residue" description="Phosphoserine" evidence="2">
    <location>
        <position position="414"/>
    </location>
</feature>
<feature type="modified residue" description="Phosphoserine" evidence="2">
    <location>
        <position position="641"/>
    </location>
</feature>
<feature type="modified residue" description="Phosphoserine" evidence="2">
    <location>
        <position position="643"/>
    </location>
</feature>
<feature type="modified residue" description="Phosphoserine" evidence="8">
    <location>
        <position position="930"/>
    </location>
</feature>
<feature type="modified residue" description="Phosphoserine" evidence="8">
    <location>
        <position position="933"/>
    </location>
</feature>
<feature type="modified residue" description="Phosphoserine" evidence="2">
    <location>
        <position position="965"/>
    </location>
</feature>
<feature type="splice variant" id="VSP_014818" description="In isoform 2." evidence="6">
    <location>
        <begin position="858"/>
        <end position="868"/>
    </location>
</feature>
<feature type="sequence conflict" description="In Ref. 1; AAB48589." evidence="7" ref="1">
    <original>G</original>
    <variation>S</variation>
    <location>
        <position position="77"/>
    </location>
</feature>
<dbReference type="EMBL" id="U67139">
    <property type="protein sequence ID" value="AAB48589.1"/>
    <property type="molecule type" value="mRNA"/>
</dbReference>
<dbReference type="EMBL" id="AY530298">
    <property type="protein sequence ID" value="AAS90634.1"/>
    <property type="molecule type" value="mRNA"/>
</dbReference>
<dbReference type="EMBL" id="AY530299">
    <property type="protein sequence ID" value="AAS90635.1"/>
    <property type="molecule type" value="mRNA"/>
</dbReference>
<dbReference type="SMR" id="P97838"/>
<dbReference type="FunCoup" id="P97838">
    <property type="interactions" value="1179"/>
</dbReference>
<dbReference type="IntAct" id="P97838">
    <property type="interactions" value="7"/>
</dbReference>
<dbReference type="MINT" id="P97838"/>
<dbReference type="STRING" id="10116.ENSRNOP00000019214"/>
<dbReference type="iPTMnet" id="P97838"/>
<dbReference type="PhosphoSitePlus" id="P97838"/>
<dbReference type="PaxDb" id="10116-ENSRNOP00000019214"/>
<dbReference type="ABCD" id="P97838">
    <property type="antibodies" value="1 sequenced antibody"/>
</dbReference>
<dbReference type="AGR" id="RGD:708349"/>
<dbReference type="RGD" id="708349">
    <property type="gene designation" value="Dlgap3"/>
</dbReference>
<dbReference type="eggNOG" id="KOG3971">
    <property type="taxonomic scope" value="Eukaryota"/>
</dbReference>
<dbReference type="InParanoid" id="P97838"/>
<dbReference type="PhylomeDB" id="P97838"/>
<dbReference type="Reactome" id="R-RNO-6794361">
    <property type="pathway name" value="Neurexins and neuroligins"/>
</dbReference>
<dbReference type="PRO" id="PR:P97838"/>
<dbReference type="Proteomes" id="UP000002494">
    <property type="component" value="Unplaced"/>
</dbReference>
<dbReference type="GO" id="GO:0098981">
    <property type="term" value="C:cholinergic synapse"/>
    <property type="evidence" value="ECO:0000266"/>
    <property type="project" value="RGD"/>
</dbReference>
<dbReference type="GO" id="GO:0043197">
    <property type="term" value="C:dendritic spine"/>
    <property type="evidence" value="ECO:0000314"/>
    <property type="project" value="RGD"/>
</dbReference>
<dbReference type="GO" id="GO:0098978">
    <property type="term" value="C:glutamatergic synapse"/>
    <property type="evidence" value="ECO:0000266"/>
    <property type="project" value="RGD"/>
</dbReference>
<dbReference type="GO" id="GO:0031594">
    <property type="term" value="C:neuromuscular junction"/>
    <property type="evidence" value="ECO:0000266"/>
    <property type="project" value="RGD"/>
</dbReference>
<dbReference type="GO" id="GO:0043025">
    <property type="term" value="C:neuronal cell body"/>
    <property type="evidence" value="ECO:0000314"/>
    <property type="project" value="RGD"/>
</dbReference>
<dbReference type="GO" id="GO:0005886">
    <property type="term" value="C:plasma membrane"/>
    <property type="evidence" value="ECO:0007669"/>
    <property type="project" value="UniProtKB-SubCell"/>
</dbReference>
<dbReference type="GO" id="GO:0014069">
    <property type="term" value="C:postsynaptic density"/>
    <property type="evidence" value="ECO:0000314"/>
    <property type="project" value="BHF-UCL"/>
</dbReference>
<dbReference type="GO" id="GO:0099572">
    <property type="term" value="C:postsynaptic specialization"/>
    <property type="evidence" value="ECO:0000266"/>
    <property type="project" value="RGD"/>
</dbReference>
<dbReference type="GO" id="GO:0045202">
    <property type="term" value="C:synapse"/>
    <property type="evidence" value="ECO:0000266"/>
    <property type="project" value="RGD"/>
</dbReference>
<dbReference type="GO" id="GO:0001540">
    <property type="term" value="F:amyloid-beta binding"/>
    <property type="evidence" value="ECO:0000266"/>
    <property type="project" value="RGD"/>
</dbReference>
<dbReference type="GO" id="GO:0060090">
    <property type="term" value="F:molecular adaptor activity"/>
    <property type="evidence" value="ECO:0000353"/>
    <property type="project" value="BHF-UCL"/>
</dbReference>
<dbReference type="GO" id="GO:0030165">
    <property type="term" value="F:PDZ domain binding"/>
    <property type="evidence" value="ECO:0000353"/>
    <property type="project" value="BHF-UCL"/>
</dbReference>
<dbReference type="GO" id="GO:0019904">
    <property type="term" value="F:protein domain specific binding"/>
    <property type="evidence" value="ECO:0000314"/>
    <property type="project" value="RGD"/>
</dbReference>
<dbReference type="GO" id="GO:0097110">
    <property type="term" value="F:scaffold protein binding"/>
    <property type="evidence" value="ECO:0000353"/>
    <property type="project" value="BHF-UCL"/>
</dbReference>
<dbReference type="GO" id="GO:0099010">
    <property type="term" value="P:modification of postsynaptic structure"/>
    <property type="evidence" value="ECO:0000266"/>
    <property type="project" value="RGD"/>
</dbReference>
<dbReference type="GO" id="GO:0050804">
    <property type="term" value="P:modulation of chemical synaptic transmission"/>
    <property type="evidence" value="ECO:0000266"/>
    <property type="project" value="RGD"/>
</dbReference>
<dbReference type="GO" id="GO:0065003">
    <property type="term" value="P:protein-containing complex assembly"/>
    <property type="evidence" value="ECO:0000314"/>
    <property type="project" value="BHF-UCL"/>
</dbReference>
<dbReference type="GO" id="GO:0023052">
    <property type="term" value="P:signaling"/>
    <property type="evidence" value="ECO:0007669"/>
    <property type="project" value="InterPro"/>
</dbReference>
<dbReference type="InterPro" id="IPR005026">
    <property type="entry name" value="SAPAP"/>
</dbReference>
<dbReference type="PANTHER" id="PTHR12353:SF4">
    <property type="entry name" value="DISKS LARGE-ASSOCIATED PROTEIN 3"/>
    <property type="match status" value="1"/>
</dbReference>
<dbReference type="PANTHER" id="PTHR12353">
    <property type="entry name" value="DISKS LARGE-ASSOCIATED PROTEIN DAP SAP90/PSD-95-ASSOCIATED PROTEIN"/>
    <property type="match status" value="1"/>
</dbReference>
<dbReference type="Pfam" id="PF03359">
    <property type="entry name" value="GKAP"/>
    <property type="match status" value="1"/>
</dbReference>
<accession>P97838</accession>
<accession>Q6QQA8</accession>
<accession>Q6QQA9</accession>
<proteinExistence type="evidence at protein level"/>